<reference key="1">
    <citation type="submission" date="2015-02" db="EMBL/GenBank/DDBJ databases">
        <title>Draft genome sequences of ten Microbacterium spp. with emphasis on heavy metal contaminated environments.</title>
        <authorList>
            <person name="Corretto E."/>
        </authorList>
    </citation>
    <scope>NUCLEOTIDE SEQUENCE [LARGE SCALE GENOMIC DNA]</scope>
    <source>
        <strain>ATCC 51475 / DSM 8608 / JCM 1358 / LMG 16696 / NBRC 15077 / NRRL B-24212 / 114-2</strain>
    </source>
</reference>
<reference evidence="7" key="2">
    <citation type="journal article" date="2021" name="Proc. Natl. Acad. Sci. U.S.A.">
        <title>FAD-dependent C-glycoside-metabolizing enzymes in microorganisms: Screening, characterization, and crystal structure analysis.</title>
        <authorList>
            <person name="Kumano T."/>
            <person name="Hori S."/>
            <person name="Watanabe S."/>
            <person name="Terashita Y."/>
            <person name="Yu H.Y."/>
            <person name="Hashimoto Y."/>
            <person name="Senda T."/>
            <person name="Senda M."/>
            <person name="Kobayashi M."/>
        </authorList>
    </citation>
    <scope>X-RAY CRYSTALLOGRAPHY (2.40 ANGSTROMS) IN COMPLEX WITH FAD</scope>
    <scope>FUNCTION</scope>
    <scope>CATALYTIC ACTIVITY</scope>
    <scope>PROPOSED REACTION MECHANISM</scope>
    <scope>COFACTOR</scope>
    <scope>SUBUNIT</scope>
    <scope>ACTIVE SITE</scope>
    <source>
        <strain>ATCC 51475 / DSM 8608 / JCM 1358 / LMG 16696 / NBRC 15077 / NRRL B-24212 / 114-2</strain>
    </source>
</reference>
<dbReference type="EC" id="1.1.3.50" evidence="2"/>
<dbReference type="EMBL" id="JYJA01000033">
    <property type="protein sequence ID" value="KJL42927.1"/>
    <property type="molecule type" value="Genomic_DNA"/>
</dbReference>
<dbReference type="RefSeq" id="WP_045298611.1">
    <property type="nucleotide sequence ID" value="NZ_JYJA01000033.1"/>
</dbReference>
<dbReference type="PDB" id="7DVE">
    <property type="method" value="X-ray"/>
    <property type="resolution" value="2.40 A"/>
    <property type="chains" value="A/B=1-515"/>
</dbReference>
<dbReference type="PDBsum" id="7DVE"/>
<dbReference type="SMR" id="A0A0M2HFA3"/>
<dbReference type="PATRIC" id="fig|69370.6.peg.1924"/>
<dbReference type="OrthoDB" id="9798604at2"/>
<dbReference type="Proteomes" id="UP000034098">
    <property type="component" value="Unassembled WGS sequence"/>
</dbReference>
<dbReference type="GO" id="GO:0050660">
    <property type="term" value="F:flavin adenine dinucleotide binding"/>
    <property type="evidence" value="ECO:0007669"/>
    <property type="project" value="InterPro"/>
</dbReference>
<dbReference type="GO" id="GO:0016614">
    <property type="term" value="F:oxidoreductase activity, acting on CH-OH group of donors"/>
    <property type="evidence" value="ECO:0007669"/>
    <property type="project" value="InterPro"/>
</dbReference>
<dbReference type="Gene3D" id="3.50.50.60">
    <property type="entry name" value="FAD/NAD(P)-binding domain"/>
    <property type="match status" value="2"/>
</dbReference>
<dbReference type="InterPro" id="IPR036188">
    <property type="entry name" value="FAD/NAD-bd_sf"/>
</dbReference>
<dbReference type="InterPro" id="IPR000172">
    <property type="entry name" value="GMC_OxRdtase_N"/>
</dbReference>
<dbReference type="InterPro" id="IPR007867">
    <property type="entry name" value="GMC_OxRtase_C"/>
</dbReference>
<dbReference type="InterPro" id="IPR051473">
    <property type="entry name" value="P2Ox-like"/>
</dbReference>
<dbReference type="PANTHER" id="PTHR42784">
    <property type="entry name" value="PYRANOSE 2-OXIDASE"/>
    <property type="match status" value="1"/>
</dbReference>
<dbReference type="PANTHER" id="PTHR42784:SF1">
    <property type="entry name" value="PYRANOSE 2-OXIDASE"/>
    <property type="match status" value="1"/>
</dbReference>
<dbReference type="Pfam" id="PF05199">
    <property type="entry name" value="GMC_oxred_C"/>
    <property type="match status" value="1"/>
</dbReference>
<dbReference type="Pfam" id="PF00732">
    <property type="entry name" value="GMC_oxred_N"/>
    <property type="match status" value="1"/>
</dbReference>
<dbReference type="SUPFAM" id="SSF54373">
    <property type="entry name" value="FAD-linked reductases, C-terminal domain"/>
    <property type="match status" value="1"/>
</dbReference>
<dbReference type="SUPFAM" id="SSF51905">
    <property type="entry name" value="FAD/NAD(P)-binding domain"/>
    <property type="match status" value="1"/>
</dbReference>
<organism>
    <name type="scientific">Microbacterium trichothecenolyticum</name>
    <name type="common">Aureobacterium trichothecenolyticum</name>
    <dbReference type="NCBI Taxonomy" id="69370"/>
    <lineage>
        <taxon>Bacteria</taxon>
        <taxon>Bacillati</taxon>
        <taxon>Actinomycetota</taxon>
        <taxon>Actinomycetes</taxon>
        <taxon>Micrococcales</taxon>
        <taxon>Microbacteriaceae</taxon>
        <taxon>Microbacterium</taxon>
    </lineage>
</organism>
<keyword id="KW-0002">3D-structure</keyword>
<keyword id="KW-0274">FAD</keyword>
<keyword id="KW-0285">Flavoprotein</keyword>
<keyword id="KW-0560">Oxidoreductase</keyword>
<keyword id="KW-1185">Reference proteome</keyword>
<evidence type="ECO:0000256" key="1">
    <source>
        <dbReference type="SAM" id="MobiDB-lite"/>
    </source>
</evidence>
<evidence type="ECO:0000269" key="2">
    <source>
    </source>
</evidence>
<evidence type="ECO:0000303" key="3">
    <source>
    </source>
</evidence>
<evidence type="ECO:0000305" key="4"/>
<evidence type="ECO:0000305" key="5">
    <source>
    </source>
</evidence>
<evidence type="ECO:0000312" key="6">
    <source>
        <dbReference type="EMBL" id="KJL42927.1"/>
    </source>
</evidence>
<evidence type="ECO:0007744" key="7">
    <source>
        <dbReference type="PDB" id="7DVE"/>
    </source>
</evidence>
<evidence type="ECO:0007829" key="8">
    <source>
        <dbReference type="PDB" id="7DVE"/>
    </source>
</evidence>
<gene>
    <name evidence="3" type="primary">carA</name>
    <name evidence="6" type="synonym">livQ_3</name>
    <name evidence="6" type="ORF">RS82_01892</name>
</gene>
<name>CGLYO_MICTR</name>
<proteinExistence type="evidence at protein level"/>
<feature type="chain" id="PRO_0000460967" description="C-glycoside 3-oxidase">
    <location>
        <begin position="1"/>
        <end position="515"/>
    </location>
</feature>
<feature type="region of interest" description="Disordered" evidence="1">
    <location>
        <begin position="62"/>
        <end position="90"/>
    </location>
</feature>
<feature type="compositionally biased region" description="Basic and acidic residues" evidence="1">
    <location>
        <begin position="62"/>
        <end position="82"/>
    </location>
</feature>
<feature type="active site" description="Proton acceptor" evidence="5">
    <location>
        <position position="444"/>
    </location>
</feature>
<feature type="binding site" evidence="2 7">
    <location>
        <position position="41"/>
    </location>
    <ligand>
        <name>FAD</name>
        <dbReference type="ChEBI" id="CHEBI:57692"/>
    </ligand>
</feature>
<feature type="binding site" evidence="2 7">
    <location>
        <position position="118"/>
    </location>
    <ligand>
        <name>FAD</name>
        <dbReference type="ChEBI" id="CHEBI:57692"/>
    </ligand>
</feature>
<feature type="binding site" evidence="2 7">
    <location>
        <position position="120"/>
    </location>
    <ligand>
        <name>FAD</name>
        <dbReference type="ChEBI" id="CHEBI:57692"/>
    </ligand>
</feature>
<feature type="binding site" evidence="2 7">
    <location>
        <position position="124"/>
    </location>
    <ligand>
        <name>FAD</name>
        <dbReference type="ChEBI" id="CHEBI:57692"/>
    </ligand>
</feature>
<feature type="binding site" evidence="2 7">
    <location>
        <position position="129"/>
    </location>
    <ligand>
        <name>FAD</name>
        <dbReference type="ChEBI" id="CHEBI:57692"/>
    </ligand>
</feature>
<feature type="binding site" evidence="2 7">
    <location>
        <position position="131"/>
    </location>
    <ligand>
        <name>FAD</name>
        <dbReference type="ChEBI" id="CHEBI:57692"/>
    </ligand>
</feature>
<feature type="binding site" evidence="2 7">
    <location>
        <position position="237"/>
    </location>
    <ligand>
        <name>FAD</name>
        <dbReference type="ChEBI" id="CHEBI:57692"/>
    </ligand>
</feature>
<feature type="binding site" evidence="2 7">
    <location>
        <position position="478"/>
    </location>
    <ligand>
        <name>FAD</name>
        <dbReference type="ChEBI" id="CHEBI:57692"/>
    </ligand>
</feature>
<feature type="binding site" evidence="2 7">
    <location>
        <position position="490"/>
    </location>
    <ligand>
        <name>FAD</name>
        <dbReference type="ChEBI" id="CHEBI:57692"/>
    </ligand>
</feature>
<feature type="strand" evidence="8">
    <location>
        <begin position="11"/>
        <end position="15"/>
    </location>
</feature>
<feature type="helix" evidence="8">
    <location>
        <begin position="19"/>
        <end position="31"/>
    </location>
</feature>
<feature type="strand" evidence="8">
    <location>
        <begin position="37"/>
        <end position="40"/>
    </location>
</feature>
<feature type="strand" evidence="8">
    <location>
        <begin position="47"/>
        <end position="49"/>
    </location>
</feature>
<feature type="helix" evidence="8">
    <location>
        <begin position="54"/>
        <end position="56"/>
    </location>
</feature>
<feature type="helix" evidence="8">
    <location>
        <begin position="60"/>
        <end position="69"/>
    </location>
</feature>
<feature type="helix" evidence="8">
    <location>
        <begin position="123"/>
        <end position="126"/>
    </location>
</feature>
<feature type="helix" evidence="8">
    <location>
        <begin position="137"/>
        <end position="139"/>
    </location>
</feature>
<feature type="helix" evidence="8">
    <location>
        <begin position="142"/>
        <end position="145"/>
    </location>
</feature>
<feature type="turn" evidence="8">
    <location>
        <begin position="146"/>
        <end position="148"/>
    </location>
</feature>
<feature type="helix" evidence="8">
    <location>
        <begin position="149"/>
        <end position="161"/>
    </location>
</feature>
<feature type="strand" evidence="8">
    <location>
        <begin position="163"/>
        <end position="165"/>
    </location>
</feature>
<feature type="turn" evidence="8">
    <location>
        <begin position="167"/>
        <end position="170"/>
    </location>
</feature>
<feature type="turn" evidence="8">
    <location>
        <begin position="172"/>
        <end position="175"/>
    </location>
</feature>
<feature type="helix" evidence="8">
    <location>
        <begin position="176"/>
        <end position="183"/>
    </location>
</feature>
<feature type="helix" evidence="8">
    <location>
        <begin position="191"/>
        <end position="193"/>
    </location>
</feature>
<feature type="strand" evidence="8">
    <location>
        <begin position="200"/>
        <end position="204"/>
    </location>
</feature>
<feature type="strand" evidence="8">
    <location>
        <begin position="210"/>
        <end position="212"/>
    </location>
</feature>
<feature type="helix" evidence="8">
    <location>
        <begin position="215"/>
        <end position="224"/>
    </location>
</feature>
<feature type="strand" evidence="8">
    <location>
        <begin position="229"/>
        <end position="243"/>
    </location>
</feature>
<feature type="strand" evidence="8">
    <location>
        <begin position="246"/>
        <end position="254"/>
    </location>
</feature>
<feature type="turn" evidence="8">
    <location>
        <begin position="255"/>
        <end position="257"/>
    </location>
</feature>
<feature type="strand" evidence="8">
    <location>
        <begin position="260"/>
        <end position="264"/>
    </location>
</feature>
<feature type="strand" evidence="8">
    <location>
        <begin position="266"/>
        <end position="270"/>
    </location>
</feature>
<feature type="helix" evidence="8">
    <location>
        <begin position="276"/>
        <end position="283"/>
    </location>
</feature>
<feature type="turn" evidence="8">
    <location>
        <begin position="289"/>
        <end position="292"/>
    </location>
</feature>
<feature type="strand" evidence="8">
    <location>
        <begin position="300"/>
        <end position="309"/>
    </location>
</feature>
<feature type="strand" evidence="8">
    <location>
        <begin position="321"/>
        <end position="323"/>
    </location>
</feature>
<feature type="strand" evidence="8">
    <location>
        <begin position="330"/>
        <end position="333"/>
    </location>
</feature>
<feature type="strand" evidence="8">
    <location>
        <begin position="341"/>
        <end position="347"/>
    </location>
</feature>
<feature type="helix" evidence="8">
    <location>
        <begin position="348"/>
        <end position="350"/>
    </location>
</feature>
<feature type="strand" evidence="8">
    <location>
        <begin position="366"/>
        <end position="373"/>
    </location>
</feature>
<feature type="strand" evidence="8">
    <location>
        <begin position="382"/>
        <end position="390"/>
    </location>
</feature>
<feature type="strand" evidence="8">
    <location>
        <begin position="394"/>
        <end position="401"/>
    </location>
</feature>
<feature type="helix" evidence="8">
    <location>
        <begin position="406"/>
        <end position="424"/>
    </location>
</feature>
<feature type="strand" evidence="8">
    <location>
        <begin position="427"/>
        <end position="433"/>
    </location>
</feature>
<feature type="turn" evidence="8">
    <location>
        <begin position="439"/>
        <end position="442"/>
    </location>
</feature>
<feature type="strand" evidence="8">
    <location>
        <begin position="456"/>
        <end position="458"/>
    </location>
</feature>
<feature type="strand" evidence="8">
    <location>
        <begin position="465"/>
        <end position="467"/>
    </location>
</feature>
<feature type="strand" evidence="8">
    <location>
        <begin position="473"/>
        <end position="475"/>
    </location>
</feature>
<feature type="helix" evidence="8">
    <location>
        <begin position="478"/>
        <end position="480"/>
    </location>
</feature>
<feature type="helix" evidence="8">
    <location>
        <begin position="490"/>
        <end position="510"/>
    </location>
</feature>
<comment type="function">
    <text evidence="2">FAD-dependent C-glycoside-metabolizing enzyme that participates in the degradation of certain C-glycosides by catalyzing the oxidation of the hydroxyl group at the C3 position of the sugar moiety (PubMed:34583991). Shows oxidase activity toward C-glycosides such as isoorientin and mangiferin but cannot use carminic acid, puerarin, orientin or aloesin (PubMed:34583991). Shows weak activity (100 to 1000-fold lower) with O-glycosides (PubMed:34583991). Probably plays a crucial role in the metabolism of C-glycosides in nature (PubMed:34583991).</text>
</comment>
<comment type="catalytic activity">
    <reaction evidence="2">
        <text>isoorientin + O2 = 3''-dehydroisoorientin + H2O2</text>
        <dbReference type="Rhea" id="RHEA:75259"/>
        <dbReference type="ChEBI" id="CHEBI:15379"/>
        <dbReference type="ChEBI" id="CHEBI:16240"/>
        <dbReference type="ChEBI" id="CHEBI:58333"/>
        <dbReference type="ChEBI" id="CHEBI:194218"/>
        <dbReference type="EC" id="1.1.3.50"/>
    </reaction>
</comment>
<comment type="catalytic activity">
    <reaction evidence="2">
        <text>mangiferin + O2 = 3'-dehydromangiferin + H2O2</text>
        <dbReference type="Rhea" id="RHEA:75255"/>
        <dbReference type="ChEBI" id="CHEBI:15379"/>
        <dbReference type="ChEBI" id="CHEBI:16240"/>
        <dbReference type="ChEBI" id="CHEBI:194216"/>
        <dbReference type="ChEBI" id="CHEBI:194217"/>
        <dbReference type="EC" id="1.1.3.50"/>
    </reaction>
</comment>
<comment type="cofactor">
    <cofactor evidence="2">
        <name>FAD</name>
        <dbReference type="ChEBI" id="CHEBI:57692"/>
    </cofactor>
    <text evidence="2">Binds 1 FAD per subunit.</text>
</comment>
<comment type="subunit">
    <text evidence="2">Monomer.</text>
</comment>
<comment type="similarity">
    <text evidence="4">Belongs to the GMC oxidoreductase family.</text>
</comment>
<protein>
    <recommendedName>
        <fullName evidence="3">C-glycoside 3-oxidase</fullName>
        <ecNumber evidence="2">1.1.3.50</ecNumber>
    </recommendedName>
    <alternativeName>
        <fullName evidence="3">MtCarA</fullName>
    </alternativeName>
</protein>
<accession>A0A0M2HFA3</accession>
<sequence>MSTRVYPAQVDVAIVGSGPAGATYARILSERASSATIAMFEVGPTVSDPPGAHVKNIADADERAHAQRRSEGPHAREDDDRVGGIVKSAQRRARPGTYLLESGYQADGEDGLPVAAFSSNVGGMAAHWTGACPRPNDSERIGFLDETGELDELLSEGERLLGVTTDAFDASPYAGIVRERLAAVEDAHRDADERVQRMPLAVHRRDDGPLVWSGSDVVLGDITRGNPNFTLFDESLVTRVLVEDGRAAGVVVTDVRTGERRDVRARFVVVAADALRTPQLLWASGIRPDALGRYLNDQAQIVFAVRMRDFTPVVDADGVPQTGLSEYTGVTWVPFTDDMPFHGQVMQLDASPVKLADDDPAAPGSIVGLGLFCAKDLQASDRVAFSDSDVDGYGMPAMQLHYTLSDRDHATIDRAKAEIVRLGKAIGDPLDDRPFVMPLGASLHYQGTVRMGLADDGASVCSPDSEVWGAPGLFVAGNGVIPTATACNPTLTGVALAVRGARHIADEITADLASV</sequence>